<comment type="function">
    <text evidence="1">Peptidase that processes the N-terminus of prepilins.</text>
</comment>
<comment type="subcellular location">
    <subcellularLocation>
        <location evidence="3">Cell membrane</location>
        <topology evidence="2">Multi-pass membrane protein</topology>
    </subcellularLocation>
</comment>
<comment type="similarity">
    <text evidence="3">Belongs to the peptidase A24 family.</text>
</comment>
<evidence type="ECO:0000250" key="1">
    <source>
        <dbReference type="UniProtKB" id="Q6M0N8"/>
    </source>
</evidence>
<evidence type="ECO:0000255" key="2"/>
<evidence type="ECO:0000305" key="3"/>
<reference key="1">
    <citation type="journal article" date="1997" name="J. Bacteriol.">
        <title>Complete genome sequence of Methanobacterium thermoautotrophicum deltaH: functional analysis and comparative genomics.</title>
        <authorList>
            <person name="Smith D.R."/>
            <person name="Doucette-Stamm L.A."/>
            <person name="Deloughery C."/>
            <person name="Lee H.-M."/>
            <person name="Dubois J."/>
            <person name="Aldredge T."/>
            <person name="Bashirzadeh R."/>
            <person name="Blakely D."/>
            <person name="Cook R."/>
            <person name="Gilbert K."/>
            <person name="Harrison D."/>
            <person name="Hoang L."/>
            <person name="Keagle P."/>
            <person name="Lumm W."/>
            <person name="Pothier B."/>
            <person name="Qiu D."/>
            <person name="Spadafora R."/>
            <person name="Vicare R."/>
            <person name="Wang Y."/>
            <person name="Wierzbowski J."/>
            <person name="Gibson R."/>
            <person name="Jiwani N."/>
            <person name="Caruso A."/>
            <person name="Bush D."/>
            <person name="Safer H."/>
            <person name="Patwell D."/>
            <person name="Prabhakar S."/>
            <person name="McDougall S."/>
            <person name="Shimer G."/>
            <person name="Goyal A."/>
            <person name="Pietrovski S."/>
            <person name="Church G.M."/>
            <person name="Daniels C.J."/>
            <person name="Mao J.-I."/>
            <person name="Rice P."/>
            <person name="Noelling J."/>
            <person name="Reeve J.N."/>
        </authorList>
    </citation>
    <scope>NUCLEOTIDE SEQUENCE [LARGE SCALE GENOMIC DNA]</scope>
    <source>
        <strain>ATCC 29096 / DSM 1053 / JCM 10044 / NBRC 100330 / Delta H</strain>
    </source>
</reference>
<organism>
    <name type="scientific">Methanothermobacter thermautotrophicus (strain ATCC 29096 / DSM 1053 / JCM 10044 / NBRC 100330 / Delta H)</name>
    <name type="common">Methanobacterium thermoautotrophicum</name>
    <dbReference type="NCBI Taxonomy" id="187420"/>
    <lineage>
        <taxon>Archaea</taxon>
        <taxon>Methanobacteriati</taxon>
        <taxon>Methanobacteriota</taxon>
        <taxon>Methanomada group</taxon>
        <taxon>Methanobacteria</taxon>
        <taxon>Methanobacteriales</taxon>
        <taxon>Methanobacteriaceae</taxon>
        <taxon>Methanothermobacter</taxon>
    </lineage>
</organism>
<protein>
    <recommendedName>
        <fullName evidence="1">Prepilin peptidase EppA</fullName>
        <ecNumber evidence="1">3.4.-.-</ecNumber>
    </recommendedName>
    <alternativeName>
        <fullName evidence="1">Euryarchaeal type IV prepilin peptidase</fullName>
    </alternativeName>
</protein>
<accession>O26521</accession>
<gene>
    <name evidence="1" type="primary">eppA</name>
    <name type="ordered locus">MTH_421</name>
</gene>
<proteinExistence type="inferred from homology"/>
<name>EPPA_METTH</name>
<feature type="chain" id="PRO_0000107072" description="Prepilin peptidase EppA">
    <location>
        <begin position="1"/>
        <end position="385"/>
    </location>
</feature>
<feature type="transmembrane region" description="Helical" evidence="2">
    <location>
        <begin position="1"/>
        <end position="21"/>
    </location>
</feature>
<feature type="transmembrane region" description="Helical" evidence="2">
    <location>
        <begin position="29"/>
        <end position="49"/>
    </location>
</feature>
<feature type="transmembrane region" description="Helical" evidence="2">
    <location>
        <begin position="58"/>
        <end position="78"/>
    </location>
</feature>
<feature type="transmembrane region" description="Helical" evidence="2">
    <location>
        <begin position="80"/>
        <end position="100"/>
    </location>
</feature>
<feature type="transmembrane region" description="Helical" evidence="2">
    <location>
        <begin position="104"/>
        <end position="124"/>
    </location>
</feature>
<feature type="transmembrane region" description="Helical" evidence="2">
    <location>
        <begin position="126"/>
        <end position="146"/>
    </location>
</feature>
<feature type="transmembrane region" description="Helical" evidence="2">
    <location>
        <begin position="166"/>
        <end position="186"/>
    </location>
</feature>
<feature type="transmembrane region" description="Helical" evidence="2">
    <location>
        <begin position="187"/>
        <end position="207"/>
    </location>
</feature>
<feature type="transmembrane region" description="Helical" evidence="2">
    <location>
        <begin position="231"/>
        <end position="251"/>
    </location>
</feature>
<feature type="transmembrane region" description="Helical" evidence="2">
    <location>
        <begin position="358"/>
        <end position="378"/>
    </location>
</feature>
<keyword id="KW-1003">Cell membrane</keyword>
<keyword id="KW-0378">Hydrolase</keyword>
<keyword id="KW-0472">Membrane</keyword>
<keyword id="KW-0645">Protease</keyword>
<keyword id="KW-1185">Reference proteome</keyword>
<keyword id="KW-0812">Transmembrane</keyword>
<keyword id="KW-1133">Transmembrane helix</keyword>
<dbReference type="EC" id="3.4.-.-" evidence="1"/>
<dbReference type="EMBL" id="AE000666">
    <property type="protein sequence ID" value="AAB84927.1"/>
    <property type="molecule type" value="Genomic_DNA"/>
</dbReference>
<dbReference type="PIR" id="H69154">
    <property type="entry name" value="H69154"/>
</dbReference>
<dbReference type="FunCoup" id="O26521">
    <property type="interactions" value="2"/>
</dbReference>
<dbReference type="STRING" id="187420.MTH_421"/>
<dbReference type="PaxDb" id="187420-MTH_421"/>
<dbReference type="EnsemblBacteria" id="AAB84927">
    <property type="protein sequence ID" value="AAB84927"/>
    <property type="gene ID" value="MTH_421"/>
</dbReference>
<dbReference type="KEGG" id="mth:MTH_421"/>
<dbReference type="HOGENOM" id="CLU_716919_0_0_2"/>
<dbReference type="InParanoid" id="O26521"/>
<dbReference type="Proteomes" id="UP000005223">
    <property type="component" value="Chromosome"/>
</dbReference>
<dbReference type="GO" id="GO:0005886">
    <property type="term" value="C:plasma membrane"/>
    <property type="evidence" value="ECO:0007669"/>
    <property type="project" value="UniProtKB-SubCell"/>
</dbReference>
<dbReference type="GO" id="GO:0004190">
    <property type="term" value="F:aspartic-type endopeptidase activity"/>
    <property type="evidence" value="ECO:0007669"/>
    <property type="project" value="InterPro"/>
</dbReference>
<dbReference type="Gene3D" id="1.20.120.1220">
    <property type="match status" value="1"/>
</dbReference>
<dbReference type="InterPro" id="IPR009639">
    <property type="entry name" value="Pept_A24A_C_arc"/>
</dbReference>
<dbReference type="InterPro" id="IPR000045">
    <property type="entry name" value="Prepilin_IV_endopep_pep"/>
</dbReference>
<dbReference type="Pfam" id="PF06819">
    <property type="entry name" value="Arc_PepC"/>
    <property type="match status" value="1"/>
</dbReference>
<dbReference type="Pfam" id="PF01478">
    <property type="entry name" value="Peptidase_A24"/>
    <property type="match status" value="1"/>
</dbReference>
<sequence length="385" mass="43349">MILMVIELLSVFIALLACFYASYSDIKRGIIPNRLTFPVIGLGLLLNGARALMESDPWIFIYTAIFTAGIFALGYILWRMVAWAGGDVKLFTAVTSLLPFQPSLVSYSFLGTAFPVTASYPFPLTVIINSILALLPFLLVYVFFIIYTSRRHLMDEFMEPLRQYRTSMVLALVITSAVTLTFLITDFLPFQIIVLSLILVYLLTMVISRLPPRIKAVIVSVIIVYSLYKNFELTVSGVVILWVSITVIQLIRKLLTSITREALQDTMGVDELKEGMILASTLYRKGDEYYFDDSSLLDRFRTAARTGDVSALTYRGEPVVSAMAAGLREEEIETLRDLVSRGKIKDEFRIRRGMPFAPAIFIGLLVSLLIGDLAMILFRLFDIIF</sequence>